<comment type="function">
    <text evidence="1">Catalyzes the formation of S-adenosylmethionine (AdoMet) from methionine and ATP. The overall synthetic reaction is composed of two sequential steps, AdoMet formation and the subsequent tripolyphosphate hydrolysis which occurs prior to release of AdoMet from the enzyme.</text>
</comment>
<comment type="catalytic activity">
    <reaction evidence="1">
        <text>L-methionine + ATP + H2O = S-adenosyl-L-methionine + phosphate + diphosphate</text>
        <dbReference type="Rhea" id="RHEA:21080"/>
        <dbReference type="ChEBI" id="CHEBI:15377"/>
        <dbReference type="ChEBI" id="CHEBI:30616"/>
        <dbReference type="ChEBI" id="CHEBI:33019"/>
        <dbReference type="ChEBI" id="CHEBI:43474"/>
        <dbReference type="ChEBI" id="CHEBI:57844"/>
        <dbReference type="ChEBI" id="CHEBI:59789"/>
        <dbReference type="EC" id="2.5.1.6"/>
    </reaction>
</comment>
<comment type="cofactor">
    <cofactor evidence="1">
        <name>Mg(2+)</name>
        <dbReference type="ChEBI" id="CHEBI:18420"/>
    </cofactor>
    <text evidence="1">Binds 2 divalent ions per subunit.</text>
</comment>
<comment type="cofactor">
    <cofactor evidence="1">
        <name>K(+)</name>
        <dbReference type="ChEBI" id="CHEBI:29103"/>
    </cofactor>
    <text evidence="1">Binds 1 potassium ion per subunit.</text>
</comment>
<comment type="pathway">
    <text evidence="1">Amino-acid biosynthesis; S-adenosyl-L-methionine biosynthesis; S-adenosyl-L-methionine from L-methionine: step 1/1.</text>
</comment>
<comment type="subunit">
    <text evidence="1">Homotetramer; dimer of dimers.</text>
</comment>
<comment type="subcellular location">
    <subcellularLocation>
        <location evidence="1">Cytoplasm</location>
    </subcellularLocation>
</comment>
<comment type="similarity">
    <text evidence="1">Belongs to the AdoMet synthase family.</text>
</comment>
<gene>
    <name evidence="1" type="primary">metK</name>
    <name type="ordered locus">Franean1_1716</name>
</gene>
<keyword id="KW-0067">ATP-binding</keyword>
<keyword id="KW-0963">Cytoplasm</keyword>
<keyword id="KW-0460">Magnesium</keyword>
<keyword id="KW-0479">Metal-binding</keyword>
<keyword id="KW-0547">Nucleotide-binding</keyword>
<keyword id="KW-0554">One-carbon metabolism</keyword>
<keyword id="KW-0630">Potassium</keyword>
<keyword id="KW-0808">Transferase</keyword>
<sequence>MATRLFTSESVTEGHPDKIADQVSDSILDAMLKDDPKSRVAVETMITTGQVHVAGEVTTKTYVDIASVVRERILEIGYDSSKKGFDGASCGVSVSIGSQSPDIAQGVDTAHEARVEGSTEDDLDRQGAGDQGLMFGFACDETPELMPLPIALAHRLARRLSAVRKDGQVGYLRPDGKTQVTIEYEDGKPVRLDTVVVSSQHAADIDLDTLLAPDVAEYVVEPELALLEISTEGRRLLVNPTGRFEIGGPMGDAGLTGRKIIVDTYGGYARHGGGAFSGKDPSKVDRSAAYAMRWVAKNVVAAGLASRCEVQVAYAIGKAHPVGLFVETFGTGKVPDAQIQDAVTQVFDLRPAAIVRDLDLLRPIYAQTAAYGHFGRPELDFTWEATSRADALTAAVKG</sequence>
<accession>A8LE19</accession>
<organism>
    <name type="scientific">Parafrankia sp. (strain EAN1pec)</name>
    <dbReference type="NCBI Taxonomy" id="298653"/>
    <lineage>
        <taxon>Bacteria</taxon>
        <taxon>Bacillati</taxon>
        <taxon>Actinomycetota</taxon>
        <taxon>Actinomycetes</taxon>
        <taxon>Frankiales</taxon>
        <taxon>Frankiaceae</taxon>
        <taxon>Parafrankia</taxon>
    </lineage>
</organism>
<feature type="chain" id="PRO_1000093050" description="S-adenosylmethionine synthase">
    <location>
        <begin position="1"/>
        <end position="398"/>
    </location>
</feature>
<feature type="region of interest" description="Flexible loop" evidence="1">
    <location>
        <begin position="99"/>
        <end position="109"/>
    </location>
</feature>
<feature type="binding site" description="in other chain" evidence="1">
    <location>
        <position position="15"/>
    </location>
    <ligand>
        <name>ATP</name>
        <dbReference type="ChEBI" id="CHEBI:30616"/>
        <note>ligand shared between two neighboring subunits</note>
    </ligand>
</feature>
<feature type="binding site" evidence="1">
    <location>
        <position position="17"/>
    </location>
    <ligand>
        <name>Mg(2+)</name>
        <dbReference type="ChEBI" id="CHEBI:18420"/>
    </ligand>
</feature>
<feature type="binding site" evidence="1">
    <location>
        <position position="43"/>
    </location>
    <ligand>
        <name>K(+)</name>
        <dbReference type="ChEBI" id="CHEBI:29103"/>
    </ligand>
</feature>
<feature type="binding site" description="in other chain" evidence="1">
    <location>
        <position position="56"/>
    </location>
    <ligand>
        <name>L-methionine</name>
        <dbReference type="ChEBI" id="CHEBI:57844"/>
        <note>ligand shared between two neighboring subunits</note>
    </ligand>
</feature>
<feature type="binding site" description="in other chain" evidence="1">
    <location>
        <position position="99"/>
    </location>
    <ligand>
        <name>L-methionine</name>
        <dbReference type="ChEBI" id="CHEBI:57844"/>
        <note>ligand shared between two neighboring subunits</note>
    </ligand>
</feature>
<feature type="binding site" description="in other chain" evidence="1">
    <location>
        <begin position="175"/>
        <end position="177"/>
    </location>
    <ligand>
        <name>ATP</name>
        <dbReference type="ChEBI" id="CHEBI:30616"/>
        <note>ligand shared between two neighboring subunits</note>
    </ligand>
</feature>
<feature type="binding site" description="in other chain" evidence="1">
    <location>
        <begin position="243"/>
        <end position="244"/>
    </location>
    <ligand>
        <name>ATP</name>
        <dbReference type="ChEBI" id="CHEBI:30616"/>
        <note>ligand shared between two neighboring subunits</note>
    </ligand>
</feature>
<feature type="binding site" evidence="1">
    <location>
        <position position="252"/>
    </location>
    <ligand>
        <name>ATP</name>
        <dbReference type="ChEBI" id="CHEBI:30616"/>
        <note>ligand shared between two neighboring subunits</note>
    </ligand>
</feature>
<feature type="binding site" evidence="1">
    <location>
        <position position="252"/>
    </location>
    <ligand>
        <name>L-methionine</name>
        <dbReference type="ChEBI" id="CHEBI:57844"/>
        <note>ligand shared between two neighboring subunits</note>
    </ligand>
</feature>
<feature type="binding site" description="in other chain" evidence="1">
    <location>
        <begin position="258"/>
        <end position="259"/>
    </location>
    <ligand>
        <name>ATP</name>
        <dbReference type="ChEBI" id="CHEBI:30616"/>
        <note>ligand shared between two neighboring subunits</note>
    </ligand>
</feature>
<feature type="binding site" evidence="1">
    <location>
        <position position="275"/>
    </location>
    <ligand>
        <name>ATP</name>
        <dbReference type="ChEBI" id="CHEBI:30616"/>
        <note>ligand shared between two neighboring subunits</note>
    </ligand>
</feature>
<feature type="binding site" evidence="1">
    <location>
        <position position="279"/>
    </location>
    <ligand>
        <name>ATP</name>
        <dbReference type="ChEBI" id="CHEBI:30616"/>
        <note>ligand shared between two neighboring subunits</note>
    </ligand>
</feature>
<feature type="binding site" description="in other chain" evidence="1">
    <location>
        <position position="283"/>
    </location>
    <ligand>
        <name>L-methionine</name>
        <dbReference type="ChEBI" id="CHEBI:57844"/>
        <note>ligand shared between two neighboring subunits</note>
    </ligand>
</feature>
<evidence type="ECO:0000255" key="1">
    <source>
        <dbReference type="HAMAP-Rule" id="MF_00086"/>
    </source>
</evidence>
<protein>
    <recommendedName>
        <fullName evidence="1">S-adenosylmethionine synthase</fullName>
        <shortName evidence="1">AdoMet synthase</shortName>
        <ecNumber evidence="1">2.5.1.6</ecNumber>
    </recommendedName>
    <alternativeName>
        <fullName evidence="1">MAT</fullName>
    </alternativeName>
    <alternativeName>
        <fullName evidence="1">Methionine adenosyltransferase</fullName>
    </alternativeName>
</protein>
<name>METK_PARS2</name>
<dbReference type="EC" id="2.5.1.6" evidence="1"/>
<dbReference type="EMBL" id="CP000820">
    <property type="protein sequence ID" value="ABW11154.1"/>
    <property type="molecule type" value="Genomic_DNA"/>
</dbReference>
<dbReference type="RefSeq" id="WP_020459326.1">
    <property type="nucleotide sequence ID" value="NC_009921.1"/>
</dbReference>
<dbReference type="SMR" id="A8LE19"/>
<dbReference type="STRING" id="298653.Franean1_1716"/>
<dbReference type="KEGG" id="fre:Franean1_1716"/>
<dbReference type="eggNOG" id="COG0192">
    <property type="taxonomic scope" value="Bacteria"/>
</dbReference>
<dbReference type="HOGENOM" id="CLU_041802_1_1_11"/>
<dbReference type="UniPathway" id="UPA00315">
    <property type="reaction ID" value="UER00080"/>
</dbReference>
<dbReference type="GO" id="GO:0005737">
    <property type="term" value="C:cytoplasm"/>
    <property type="evidence" value="ECO:0007669"/>
    <property type="project" value="UniProtKB-SubCell"/>
</dbReference>
<dbReference type="GO" id="GO:0005524">
    <property type="term" value="F:ATP binding"/>
    <property type="evidence" value="ECO:0007669"/>
    <property type="project" value="UniProtKB-UniRule"/>
</dbReference>
<dbReference type="GO" id="GO:0000287">
    <property type="term" value="F:magnesium ion binding"/>
    <property type="evidence" value="ECO:0007669"/>
    <property type="project" value="UniProtKB-UniRule"/>
</dbReference>
<dbReference type="GO" id="GO:0004478">
    <property type="term" value="F:methionine adenosyltransferase activity"/>
    <property type="evidence" value="ECO:0007669"/>
    <property type="project" value="UniProtKB-UniRule"/>
</dbReference>
<dbReference type="GO" id="GO:0006730">
    <property type="term" value="P:one-carbon metabolic process"/>
    <property type="evidence" value="ECO:0007669"/>
    <property type="project" value="UniProtKB-KW"/>
</dbReference>
<dbReference type="GO" id="GO:0006556">
    <property type="term" value="P:S-adenosylmethionine biosynthetic process"/>
    <property type="evidence" value="ECO:0007669"/>
    <property type="project" value="UniProtKB-UniRule"/>
</dbReference>
<dbReference type="CDD" id="cd18079">
    <property type="entry name" value="S-AdoMet_synt"/>
    <property type="match status" value="1"/>
</dbReference>
<dbReference type="FunFam" id="3.30.300.10:FF:000004">
    <property type="entry name" value="S-adenosylmethionine synthase"/>
    <property type="match status" value="1"/>
</dbReference>
<dbReference type="FunFam" id="3.30.300.10:FF:000006">
    <property type="entry name" value="S-adenosylmethionine synthase"/>
    <property type="match status" value="1"/>
</dbReference>
<dbReference type="Gene3D" id="3.30.300.10">
    <property type="match status" value="3"/>
</dbReference>
<dbReference type="HAMAP" id="MF_00086">
    <property type="entry name" value="S_AdoMet_synth1"/>
    <property type="match status" value="1"/>
</dbReference>
<dbReference type="InterPro" id="IPR022631">
    <property type="entry name" value="ADOMET_SYNTHASE_CS"/>
</dbReference>
<dbReference type="InterPro" id="IPR022630">
    <property type="entry name" value="S-AdoMet_synt_C"/>
</dbReference>
<dbReference type="InterPro" id="IPR022629">
    <property type="entry name" value="S-AdoMet_synt_central"/>
</dbReference>
<dbReference type="InterPro" id="IPR022628">
    <property type="entry name" value="S-AdoMet_synt_N"/>
</dbReference>
<dbReference type="InterPro" id="IPR002133">
    <property type="entry name" value="S-AdoMet_synthetase"/>
</dbReference>
<dbReference type="InterPro" id="IPR022636">
    <property type="entry name" value="S-AdoMet_synthetase_sfam"/>
</dbReference>
<dbReference type="NCBIfam" id="TIGR01034">
    <property type="entry name" value="metK"/>
    <property type="match status" value="1"/>
</dbReference>
<dbReference type="PANTHER" id="PTHR11964">
    <property type="entry name" value="S-ADENOSYLMETHIONINE SYNTHETASE"/>
    <property type="match status" value="1"/>
</dbReference>
<dbReference type="Pfam" id="PF02773">
    <property type="entry name" value="S-AdoMet_synt_C"/>
    <property type="match status" value="1"/>
</dbReference>
<dbReference type="Pfam" id="PF02772">
    <property type="entry name" value="S-AdoMet_synt_M"/>
    <property type="match status" value="1"/>
</dbReference>
<dbReference type="Pfam" id="PF00438">
    <property type="entry name" value="S-AdoMet_synt_N"/>
    <property type="match status" value="1"/>
</dbReference>
<dbReference type="PIRSF" id="PIRSF000497">
    <property type="entry name" value="MAT"/>
    <property type="match status" value="1"/>
</dbReference>
<dbReference type="SUPFAM" id="SSF55973">
    <property type="entry name" value="S-adenosylmethionine synthetase"/>
    <property type="match status" value="3"/>
</dbReference>
<dbReference type="PROSITE" id="PS00376">
    <property type="entry name" value="ADOMET_SYNTHASE_1"/>
    <property type="match status" value="1"/>
</dbReference>
<dbReference type="PROSITE" id="PS00377">
    <property type="entry name" value="ADOMET_SYNTHASE_2"/>
    <property type="match status" value="1"/>
</dbReference>
<proteinExistence type="inferred from homology"/>
<reference key="1">
    <citation type="journal article" date="2007" name="Genome Res.">
        <title>Genome characteristics of facultatively symbiotic Frankia sp. strains reflect host range and host plant biogeography.</title>
        <authorList>
            <person name="Normand P."/>
            <person name="Lapierre P."/>
            <person name="Tisa L.S."/>
            <person name="Gogarten J.P."/>
            <person name="Alloisio N."/>
            <person name="Bagnarol E."/>
            <person name="Bassi C.A."/>
            <person name="Berry A.M."/>
            <person name="Bickhart D.M."/>
            <person name="Choisne N."/>
            <person name="Couloux A."/>
            <person name="Cournoyer B."/>
            <person name="Cruveiller S."/>
            <person name="Daubin V."/>
            <person name="Demange N."/>
            <person name="Francino M.P."/>
            <person name="Goltsman E."/>
            <person name="Huang Y."/>
            <person name="Kopp O.R."/>
            <person name="Labarre L."/>
            <person name="Lapidus A."/>
            <person name="Lavire C."/>
            <person name="Marechal J."/>
            <person name="Martinez M."/>
            <person name="Mastronunzio J.E."/>
            <person name="Mullin B.C."/>
            <person name="Niemann J."/>
            <person name="Pujic P."/>
            <person name="Rawnsley T."/>
            <person name="Rouy Z."/>
            <person name="Schenowitz C."/>
            <person name="Sellstedt A."/>
            <person name="Tavares F."/>
            <person name="Tomkins J.P."/>
            <person name="Vallenet D."/>
            <person name="Valverde C."/>
            <person name="Wall L.G."/>
            <person name="Wang Y."/>
            <person name="Medigue C."/>
            <person name="Benson D.R."/>
        </authorList>
    </citation>
    <scope>NUCLEOTIDE SEQUENCE [LARGE SCALE GENOMIC DNA]</scope>
    <source>
        <strain>EAN1pec</strain>
    </source>
</reference>